<dbReference type="EMBL" id="AE000783">
    <property type="protein sequence ID" value="AAC66506.1"/>
    <property type="molecule type" value="Genomic_DNA"/>
</dbReference>
<dbReference type="PIR" id="D70116">
    <property type="entry name" value="D70116"/>
</dbReference>
<dbReference type="RefSeq" id="NP_212266.1">
    <property type="nucleotide sequence ID" value="NC_001318.1"/>
</dbReference>
<dbReference type="RefSeq" id="WP_002665455.1">
    <property type="nucleotide sequence ID" value="NC_001318.1"/>
</dbReference>
<dbReference type="SMR" id="O51157"/>
<dbReference type="STRING" id="224326.BB_0132"/>
<dbReference type="PaxDb" id="224326-BB_0132"/>
<dbReference type="EnsemblBacteria" id="AAC66506">
    <property type="protein sequence ID" value="AAC66506"/>
    <property type="gene ID" value="BB_0132"/>
</dbReference>
<dbReference type="KEGG" id="bbu:BB_0132"/>
<dbReference type="PATRIC" id="fig|224326.49.peg.530"/>
<dbReference type="HOGENOM" id="CLU_322611_0_0_12"/>
<dbReference type="OrthoDB" id="9808774at2"/>
<dbReference type="Proteomes" id="UP000001807">
    <property type="component" value="Chromosome"/>
</dbReference>
<dbReference type="GO" id="GO:0003677">
    <property type="term" value="F:DNA binding"/>
    <property type="evidence" value="ECO:0007669"/>
    <property type="project" value="UniProtKB-UniRule"/>
</dbReference>
<dbReference type="GO" id="GO:0070063">
    <property type="term" value="F:RNA polymerase binding"/>
    <property type="evidence" value="ECO:0007669"/>
    <property type="project" value="InterPro"/>
</dbReference>
<dbReference type="GO" id="GO:0006354">
    <property type="term" value="P:DNA-templated transcription elongation"/>
    <property type="evidence" value="ECO:0007669"/>
    <property type="project" value="TreeGrafter"/>
</dbReference>
<dbReference type="GO" id="GO:0032784">
    <property type="term" value="P:regulation of DNA-templated transcription elongation"/>
    <property type="evidence" value="ECO:0007669"/>
    <property type="project" value="UniProtKB-UniRule"/>
</dbReference>
<dbReference type="FunFam" id="1.10.287.180:FF:000001">
    <property type="entry name" value="Transcription elongation factor GreA"/>
    <property type="match status" value="1"/>
</dbReference>
<dbReference type="Gene3D" id="1.25.40.10">
    <property type="entry name" value="Tetratricopeptide repeat domain"/>
    <property type="match status" value="1"/>
</dbReference>
<dbReference type="Gene3D" id="3.10.50.30">
    <property type="entry name" value="Transcription elongation factor, GreA/GreB, C-terminal domain"/>
    <property type="match status" value="1"/>
</dbReference>
<dbReference type="Gene3D" id="1.10.287.180">
    <property type="entry name" value="Transcription elongation factor, GreA/GreB, N-terminal domain"/>
    <property type="match status" value="1"/>
</dbReference>
<dbReference type="HAMAP" id="MF_00105">
    <property type="entry name" value="GreA_GreB"/>
    <property type="match status" value="1"/>
</dbReference>
<dbReference type="InterPro" id="IPR036953">
    <property type="entry name" value="GreA/GreB_C_sf"/>
</dbReference>
<dbReference type="InterPro" id="IPR018151">
    <property type="entry name" value="TF_GreA/GreB_CS"/>
</dbReference>
<dbReference type="InterPro" id="IPR011990">
    <property type="entry name" value="TPR-like_helical_dom_sf"/>
</dbReference>
<dbReference type="InterPro" id="IPR006359">
    <property type="entry name" value="Tscrpt_elong_fac_GreA"/>
</dbReference>
<dbReference type="InterPro" id="IPR028624">
    <property type="entry name" value="Tscrpt_elong_fac_GreA/B"/>
</dbReference>
<dbReference type="InterPro" id="IPR001437">
    <property type="entry name" value="Tscrpt_elong_fac_GreA/B_C"/>
</dbReference>
<dbReference type="InterPro" id="IPR023459">
    <property type="entry name" value="Tscrpt_elong_fac_GreA/B_fam"/>
</dbReference>
<dbReference type="InterPro" id="IPR022691">
    <property type="entry name" value="Tscrpt_elong_fac_GreA/B_N"/>
</dbReference>
<dbReference type="InterPro" id="IPR036805">
    <property type="entry name" value="Tscrpt_elong_fac_GreA/B_N_sf"/>
</dbReference>
<dbReference type="NCBIfam" id="TIGR01462">
    <property type="entry name" value="greA"/>
    <property type="match status" value="1"/>
</dbReference>
<dbReference type="NCBIfam" id="NF011309">
    <property type="entry name" value="PRK14720.1"/>
    <property type="match status" value="1"/>
</dbReference>
<dbReference type="PANTHER" id="PTHR30437">
    <property type="entry name" value="TRANSCRIPTION ELONGATION FACTOR GREA"/>
    <property type="match status" value="1"/>
</dbReference>
<dbReference type="PANTHER" id="PTHR30437:SF4">
    <property type="entry name" value="TRANSCRIPTION ELONGATION FACTOR GREA"/>
    <property type="match status" value="1"/>
</dbReference>
<dbReference type="Pfam" id="PF01272">
    <property type="entry name" value="GreA_GreB"/>
    <property type="match status" value="1"/>
</dbReference>
<dbReference type="Pfam" id="PF03449">
    <property type="entry name" value="GreA_GreB_N"/>
    <property type="match status" value="1"/>
</dbReference>
<dbReference type="SUPFAM" id="SSF54534">
    <property type="entry name" value="FKBP-like"/>
    <property type="match status" value="1"/>
</dbReference>
<dbReference type="SUPFAM" id="SSF46557">
    <property type="entry name" value="GreA transcript cleavage protein, N-terminal domain"/>
    <property type="match status" value="1"/>
</dbReference>
<dbReference type="PROSITE" id="PS00829">
    <property type="entry name" value="GREAB_1"/>
    <property type="match status" value="1"/>
</dbReference>
<dbReference type="PROSITE" id="PS00830">
    <property type="entry name" value="GREAB_2"/>
    <property type="match status" value="1"/>
</dbReference>
<gene>
    <name type="primary">greA</name>
    <name type="ordered locus">BB_0132</name>
</gene>
<proteinExistence type="inferred from homology"/>
<accession>O51157</accession>
<evidence type="ECO:0000250" key="1"/>
<evidence type="ECO:0000255" key="2"/>
<evidence type="ECO:0000305" key="3"/>
<protein>
    <recommendedName>
        <fullName>Transcription elongation factor GreA</fullName>
    </recommendedName>
    <alternativeName>
        <fullName>Transcript cleavage factor GreA</fullName>
    </alternativeName>
</protein>
<feature type="chain" id="PRO_0000177006" description="Transcription elongation factor GreA">
    <location>
        <begin position="1"/>
        <end position="901"/>
    </location>
</feature>
<feature type="domain" description="GRAD2">
    <location>
        <begin position="20"/>
        <end position="170"/>
    </location>
</feature>
<feature type="domain" description="GRAD1">
    <location>
        <begin position="171"/>
        <end position="681"/>
    </location>
</feature>
<feature type="region of interest" description="GREA">
    <location>
        <begin position="741"/>
        <end position="901"/>
    </location>
</feature>
<feature type="coiled-coil region" evidence="2">
    <location>
        <begin position="784"/>
        <end position="815"/>
    </location>
</feature>
<name>GREA_BORBU</name>
<sequence length="901" mass="105315">MSNVTTIEKLDSILQEDKWTRIVVNNYSLAKIKELDDLINNIIDEGLTEDVLDICGRHLKDVKKSIAGLYISGMLIYSRRPLNDMNLLAVIDLFSQNLKWALVEHICNEMLLISENKHALYTLAKIYAQNNENDKLPGIWTRIVEADIDDTVFVRQLATYYETIDLQKSIFYFRKAIYRFIDKKQMSGIREVWAKLIHYVSDDFDSFLLILQKIEKDLGFKKAIVLYEDLFDHYSLTDNVDETIEILKGILKLDNKNHKARENLVKFLRERYKDVKNIEDYLVKSDIENLDKNFVDVYLDFEKYLFFAKGNFVYHQTWSVGIVRDVNDNGITVDFVSKRGHFIGFDMAMSALSPLSREDIRVLKAVTPKEELADRVKKDIEWAIKVIIKSYKAIDLKGIKKELVPSLMTQSSWNSWSLKAKQILKDNPHFVMDSGKLDCYIYNERSSNLNEKMYDKFKIEKDFYKRYEIFINYCNVKGIVKDLHIEEEMLNYFLIYVNNFTKVDHHVVSSYVILKSLGNFSEELSSKVNIEKDVNLESLLKEYPKGIVDLFDSILNAEIKKELVVLIKEELSNWILYYKELFPHSVNKRLVESLYKEDPREVEKLFNYVIKNYKIYKDAYIWILKHCKAYSIELSYSDSDLLSNLIKILTDSVIKINNKNNSVASKRIYKMVINLLVKDGYLKSVLEVVRDEELAKRVYMTCFYVKDFPPKDLLEIKSIIRQLFDSVEFEDEKMQLAGERMEIGFLTILSSLNKKQKELKYLKEVEIPENSKEIGKARELGDLKENAEYHSAKEKQQFLTKRLNSLMLEIENAKVIDTKDLQSSVVGFGTKVVILNEVTGKDESYLILGPWESNPDEGIISYKSPFGENLLDSREGDSLNFVINNTNFKYFVKKIEPIKFS</sequence>
<keyword id="KW-0175">Coiled coil</keyword>
<keyword id="KW-0238">DNA-binding</keyword>
<keyword id="KW-1185">Reference proteome</keyword>
<keyword id="KW-0804">Transcription</keyword>
<keyword id="KW-0805">Transcription regulation</keyword>
<reference key="1">
    <citation type="journal article" date="1997" name="Nature">
        <title>Genomic sequence of a Lyme disease spirochaete, Borrelia burgdorferi.</title>
        <authorList>
            <person name="Fraser C.M."/>
            <person name="Casjens S."/>
            <person name="Huang W.M."/>
            <person name="Sutton G.G."/>
            <person name="Clayton R.A."/>
            <person name="Lathigra R."/>
            <person name="White O."/>
            <person name="Ketchum K.A."/>
            <person name="Dodson R.J."/>
            <person name="Hickey E.K."/>
            <person name="Gwinn M.L."/>
            <person name="Dougherty B.A."/>
            <person name="Tomb J.-F."/>
            <person name="Fleischmann R.D."/>
            <person name="Richardson D.L."/>
            <person name="Peterson J.D."/>
            <person name="Kerlavage A.R."/>
            <person name="Quackenbush J."/>
            <person name="Salzberg S.L."/>
            <person name="Hanson M."/>
            <person name="van Vugt R."/>
            <person name="Palmer N."/>
            <person name="Adams M.D."/>
            <person name="Gocayne J.D."/>
            <person name="Weidman J.F."/>
            <person name="Utterback T.R."/>
            <person name="Watthey L."/>
            <person name="McDonald L.A."/>
            <person name="Artiach P."/>
            <person name="Bowman C."/>
            <person name="Garland S.A."/>
            <person name="Fujii C."/>
            <person name="Cotton M.D."/>
            <person name="Horst K."/>
            <person name="Roberts K.M."/>
            <person name="Hatch B."/>
            <person name="Smith H.O."/>
            <person name="Venter J.C."/>
        </authorList>
    </citation>
    <scope>NUCLEOTIDE SEQUENCE [LARGE SCALE GENOMIC DNA]</scope>
    <source>
        <strain>ATCC 35210 / DSM 4680 / CIP 102532 / B31</strain>
    </source>
</reference>
<organism>
    <name type="scientific">Borreliella burgdorferi (strain ATCC 35210 / DSM 4680 / CIP 102532 / B31)</name>
    <name type="common">Borrelia burgdorferi</name>
    <dbReference type="NCBI Taxonomy" id="224326"/>
    <lineage>
        <taxon>Bacteria</taxon>
        <taxon>Pseudomonadati</taxon>
        <taxon>Spirochaetota</taxon>
        <taxon>Spirochaetia</taxon>
        <taxon>Spirochaetales</taxon>
        <taxon>Borreliaceae</taxon>
        <taxon>Borreliella</taxon>
    </lineage>
</organism>
<comment type="function">
    <text evidence="1">Necessary for efficient RNA polymerase transcription elongation past template-encoded arresting sites. The arresting sites in DNA have the property of trapping a certain fraction of elongating RNA polymerases that pass through, resulting in locked ternary complexes. Cleavage of the nascent transcript by cleavage factors such as GreA or GreB allows the resumption of elongation from the new 3'terminus. GreA releases sequences of 2 to 3 nucleotides (By similarity).</text>
</comment>
<comment type="similarity">
    <text evidence="3">Belongs to the GreA/GreB family.</text>
</comment>